<accession>Q72SC4</accession>
<reference key="1">
    <citation type="journal article" date="2004" name="J. Bacteriol.">
        <title>Comparative genomics of two Leptospira interrogans serovars reveals novel insights into physiology and pathogenesis.</title>
        <authorList>
            <person name="Nascimento A.L.T.O."/>
            <person name="Ko A.I."/>
            <person name="Martins E.A.L."/>
            <person name="Monteiro-Vitorello C.B."/>
            <person name="Ho P.L."/>
            <person name="Haake D.A."/>
            <person name="Verjovski-Almeida S."/>
            <person name="Hartskeerl R.A."/>
            <person name="Marques M.V."/>
            <person name="Oliveira M.C."/>
            <person name="Menck C.F.M."/>
            <person name="Leite L.C.C."/>
            <person name="Carrer H."/>
            <person name="Coutinho L.L."/>
            <person name="Degrave W.M."/>
            <person name="Dellagostin O.A."/>
            <person name="El-Dorry H."/>
            <person name="Ferro E.S."/>
            <person name="Ferro M.I.T."/>
            <person name="Furlan L.R."/>
            <person name="Gamberini M."/>
            <person name="Giglioti E.A."/>
            <person name="Goes-Neto A."/>
            <person name="Goldman G.H."/>
            <person name="Goldman M.H.S."/>
            <person name="Harakava R."/>
            <person name="Jeronimo S.M.B."/>
            <person name="Junqueira-de-Azevedo I.L.M."/>
            <person name="Kimura E.T."/>
            <person name="Kuramae E.E."/>
            <person name="Lemos E.G.M."/>
            <person name="Lemos M.V.F."/>
            <person name="Marino C.L."/>
            <person name="Nunes L.R."/>
            <person name="de Oliveira R.C."/>
            <person name="Pereira G.G."/>
            <person name="Reis M.S."/>
            <person name="Schriefer A."/>
            <person name="Siqueira W.J."/>
            <person name="Sommer P."/>
            <person name="Tsai S.M."/>
            <person name="Simpson A.J.G."/>
            <person name="Ferro J.A."/>
            <person name="Camargo L.E.A."/>
            <person name="Kitajima J.P."/>
            <person name="Setubal J.C."/>
            <person name="Van Sluys M.A."/>
        </authorList>
    </citation>
    <scope>NUCLEOTIDE SEQUENCE [LARGE SCALE GENOMIC DNA]</scope>
    <source>
        <strain>Fiocruz L1-130</strain>
    </source>
</reference>
<gene>
    <name evidence="1" type="primary">gatC</name>
    <name type="ordered locus">LIC_11460</name>
</gene>
<keyword id="KW-0067">ATP-binding</keyword>
<keyword id="KW-0436">Ligase</keyword>
<keyword id="KW-0547">Nucleotide-binding</keyword>
<keyword id="KW-0648">Protein biosynthesis</keyword>
<comment type="function">
    <text evidence="1">Allows the formation of correctly charged Asn-tRNA(Asn) or Gln-tRNA(Gln) through the transamidation of misacylated Asp-tRNA(Asn) or Glu-tRNA(Gln) in organisms which lack either or both of asparaginyl-tRNA or glutaminyl-tRNA synthetases. The reaction takes place in the presence of glutamine and ATP through an activated phospho-Asp-tRNA(Asn) or phospho-Glu-tRNA(Gln).</text>
</comment>
<comment type="catalytic activity">
    <reaction evidence="1">
        <text>L-glutamyl-tRNA(Gln) + L-glutamine + ATP + H2O = L-glutaminyl-tRNA(Gln) + L-glutamate + ADP + phosphate + H(+)</text>
        <dbReference type="Rhea" id="RHEA:17521"/>
        <dbReference type="Rhea" id="RHEA-COMP:9681"/>
        <dbReference type="Rhea" id="RHEA-COMP:9684"/>
        <dbReference type="ChEBI" id="CHEBI:15377"/>
        <dbReference type="ChEBI" id="CHEBI:15378"/>
        <dbReference type="ChEBI" id="CHEBI:29985"/>
        <dbReference type="ChEBI" id="CHEBI:30616"/>
        <dbReference type="ChEBI" id="CHEBI:43474"/>
        <dbReference type="ChEBI" id="CHEBI:58359"/>
        <dbReference type="ChEBI" id="CHEBI:78520"/>
        <dbReference type="ChEBI" id="CHEBI:78521"/>
        <dbReference type="ChEBI" id="CHEBI:456216"/>
    </reaction>
</comment>
<comment type="catalytic activity">
    <reaction evidence="1">
        <text>L-aspartyl-tRNA(Asn) + L-glutamine + ATP + H2O = L-asparaginyl-tRNA(Asn) + L-glutamate + ADP + phosphate + 2 H(+)</text>
        <dbReference type="Rhea" id="RHEA:14513"/>
        <dbReference type="Rhea" id="RHEA-COMP:9674"/>
        <dbReference type="Rhea" id="RHEA-COMP:9677"/>
        <dbReference type="ChEBI" id="CHEBI:15377"/>
        <dbReference type="ChEBI" id="CHEBI:15378"/>
        <dbReference type="ChEBI" id="CHEBI:29985"/>
        <dbReference type="ChEBI" id="CHEBI:30616"/>
        <dbReference type="ChEBI" id="CHEBI:43474"/>
        <dbReference type="ChEBI" id="CHEBI:58359"/>
        <dbReference type="ChEBI" id="CHEBI:78515"/>
        <dbReference type="ChEBI" id="CHEBI:78516"/>
        <dbReference type="ChEBI" id="CHEBI:456216"/>
    </reaction>
</comment>
<comment type="subunit">
    <text evidence="1">Heterotrimer of A, B and C subunits.</text>
</comment>
<comment type="similarity">
    <text evidence="1">Belongs to the GatC family.</text>
</comment>
<sequence>MNINEDSLQKIAELSRLKIRSEEKEATLQDFNKILEYVDQIKGLDVSSIKDDEIYLHHENAIRPDLAGKHLSREEIESFAPSFQNGYFVVPKVIET</sequence>
<feature type="chain" id="PRO_0000105305" description="Aspartyl/glutamyl-tRNA(Asn/Gln) amidotransferase subunit C">
    <location>
        <begin position="1"/>
        <end position="96"/>
    </location>
</feature>
<proteinExistence type="inferred from homology"/>
<name>GATC_LEPIC</name>
<evidence type="ECO:0000255" key="1">
    <source>
        <dbReference type="HAMAP-Rule" id="MF_00122"/>
    </source>
</evidence>
<organism>
    <name type="scientific">Leptospira interrogans serogroup Icterohaemorrhagiae serovar copenhageni (strain Fiocruz L1-130)</name>
    <dbReference type="NCBI Taxonomy" id="267671"/>
    <lineage>
        <taxon>Bacteria</taxon>
        <taxon>Pseudomonadati</taxon>
        <taxon>Spirochaetota</taxon>
        <taxon>Spirochaetia</taxon>
        <taxon>Leptospirales</taxon>
        <taxon>Leptospiraceae</taxon>
        <taxon>Leptospira</taxon>
    </lineage>
</organism>
<dbReference type="EC" id="6.3.5.-" evidence="1"/>
<dbReference type="EMBL" id="AE016823">
    <property type="protein sequence ID" value="AAS70058.1"/>
    <property type="molecule type" value="Genomic_DNA"/>
</dbReference>
<dbReference type="RefSeq" id="WP_001024432.1">
    <property type="nucleotide sequence ID" value="NC_005823.1"/>
</dbReference>
<dbReference type="SMR" id="Q72SC4"/>
<dbReference type="GeneID" id="61144761"/>
<dbReference type="KEGG" id="lic:LIC_11460"/>
<dbReference type="HOGENOM" id="CLU_105899_2_1_12"/>
<dbReference type="Proteomes" id="UP000007037">
    <property type="component" value="Chromosome I"/>
</dbReference>
<dbReference type="GO" id="GO:0050566">
    <property type="term" value="F:asparaginyl-tRNA synthase (glutamine-hydrolyzing) activity"/>
    <property type="evidence" value="ECO:0007669"/>
    <property type="project" value="RHEA"/>
</dbReference>
<dbReference type="GO" id="GO:0005524">
    <property type="term" value="F:ATP binding"/>
    <property type="evidence" value="ECO:0007669"/>
    <property type="project" value="UniProtKB-KW"/>
</dbReference>
<dbReference type="GO" id="GO:0050567">
    <property type="term" value="F:glutaminyl-tRNA synthase (glutamine-hydrolyzing) activity"/>
    <property type="evidence" value="ECO:0007669"/>
    <property type="project" value="UniProtKB-UniRule"/>
</dbReference>
<dbReference type="GO" id="GO:0070681">
    <property type="term" value="P:glutaminyl-tRNAGln biosynthesis via transamidation"/>
    <property type="evidence" value="ECO:0007669"/>
    <property type="project" value="TreeGrafter"/>
</dbReference>
<dbReference type="GO" id="GO:0006450">
    <property type="term" value="P:regulation of translational fidelity"/>
    <property type="evidence" value="ECO:0007669"/>
    <property type="project" value="InterPro"/>
</dbReference>
<dbReference type="GO" id="GO:0006412">
    <property type="term" value="P:translation"/>
    <property type="evidence" value="ECO:0007669"/>
    <property type="project" value="UniProtKB-UniRule"/>
</dbReference>
<dbReference type="Gene3D" id="1.10.20.60">
    <property type="entry name" value="Glu-tRNAGln amidotransferase C subunit, N-terminal domain"/>
    <property type="match status" value="1"/>
</dbReference>
<dbReference type="HAMAP" id="MF_00122">
    <property type="entry name" value="GatC"/>
    <property type="match status" value="1"/>
</dbReference>
<dbReference type="InterPro" id="IPR036113">
    <property type="entry name" value="Asp/Glu-ADT_sf_sub_c"/>
</dbReference>
<dbReference type="InterPro" id="IPR003837">
    <property type="entry name" value="GatC"/>
</dbReference>
<dbReference type="NCBIfam" id="TIGR00135">
    <property type="entry name" value="gatC"/>
    <property type="match status" value="1"/>
</dbReference>
<dbReference type="PANTHER" id="PTHR15004">
    <property type="entry name" value="GLUTAMYL-TRNA(GLN) AMIDOTRANSFERASE SUBUNIT C, MITOCHONDRIAL"/>
    <property type="match status" value="1"/>
</dbReference>
<dbReference type="PANTHER" id="PTHR15004:SF0">
    <property type="entry name" value="GLUTAMYL-TRNA(GLN) AMIDOTRANSFERASE SUBUNIT C, MITOCHONDRIAL"/>
    <property type="match status" value="1"/>
</dbReference>
<dbReference type="Pfam" id="PF02686">
    <property type="entry name" value="GatC"/>
    <property type="match status" value="1"/>
</dbReference>
<dbReference type="SUPFAM" id="SSF141000">
    <property type="entry name" value="Glu-tRNAGln amidotransferase C subunit"/>
    <property type="match status" value="1"/>
</dbReference>
<protein>
    <recommendedName>
        <fullName evidence="1">Aspartyl/glutamyl-tRNA(Asn/Gln) amidotransferase subunit C</fullName>
        <shortName evidence="1">Asp/Glu-ADT subunit C</shortName>
        <ecNumber evidence="1">6.3.5.-</ecNumber>
    </recommendedName>
</protein>